<evidence type="ECO:0000250" key="1"/>
<evidence type="ECO:0000250" key="2">
    <source>
        <dbReference type="UniProtKB" id="P0CI24"/>
    </source>
</evidence>
<evidence type="ECO:0000255" key="3"/>
<evidence type="ECO:0000305" key="4"/>
<keyword id="KW-0165">Cleavage on pair of basic residues</keyword>
<keyword id="KW-1015">Disulfide bond</keyword>
<keyword id="KW-0379">Hydroxylation</keyword>
<keyword id="KW-0964">Secreted</keyword>
<keyword id="KW-0732">Signal</keyword>
<keyword id="KW-0800">Toxin</keyword>
<protein>
    <recommendedName>
        <fullName>Conotoxin Lt3.5</fullName>
    </recommendedName>
    <alternativeName>
        <fullName>Lt3e</fullName>
    </alternativeName>
</protein>
<accession>Q2I2Q1</accession>
<feature type="signal peptide" evidence="3">
    <location>
        <begin position="1"/>
        <end position="20"/>
    </location>
</feature>
<feature type="propeptide" id="PRO_0000315533" evidence="1">
    <location>
        <begin position="21"/>
        <end position="53"/>
    </location>
</feature>
<feature type="peptide" id="PRO_0000315534" description="Conotoxin Lt3.5">
    <location>
        <begin position="54"/>
        <end position="66"/>
    </location>
</feature>
<feature type="modified residue" description="4-hydroxyproline" evidence="1">
    <location>
        <position position="64"/>
    </location>
</feature>
<feature type="disulfide bond" evidence="2">
    <location>
        <begin position="54"/>
        <end position="66"/>
    </location>
</feature>
<feature type="disulfide bond" evidence="2">
    <location>
        <begin position="55"/>
        <end position="62"/>
    </location>
</feature>
<feature type="disulfide bond" evidence="2">
    <location>
        <begin position="59"/>
        <end position="65"/>
    </location>
</feature>
<name>M35_CONLT</name>
<organism>
    <name type="scientific">Conus litteratus</name>
    <name type="common">Lettered cone</name>
    <dbReference type="NCBI Taxonomy" id="89445"/>
    <lineage>
        <taxon>Eukaryota</taxon>
        <taxon>Metazoa</taxon>
        <taxon>Spiralia</taxon>
        <taxon>Lophotrochozoa</taxon>
        <taxon>Mollusca</taxon>
        <taxon>Gastropoda</taxon>
        <taxon>Caenogastropoda</taxon>
        <taxon>Neogastropoda</taxon>
        <taxon>Conoidea</taxon>
        <taxon>Conidae</taxon>
        <taxon>Conus</taxon>
        <taxon>Elisaconus</taxon>
    </lineage>
</organism>
<comment type="subcellular location">
    <subcellularLocation>
        <location evidence="1">Secreted</location>
    </subcellularLocation>
</comment>
<comment type="tissue specificity">
    <text>Expressed by the venom duct.</text>
</comment>
<comment type="domain">
    <text>The cysteine framework is III (CC-C-C-CC). Classified in the M-2 branch, since 2 residues stand between the fourth and the fifth cysteine residues.</text>
</comment>
<comment type="similarity">
    <text evidence="4">Belongs to the conotoxin M superfamily.</text>
</comment>
<proteinExistence type="evidence at transcript level"/>
<sequence>MMSKLGALLTICLLLFPLTAVPLDGDQPLDRHAERMHDGISPKRHPWFDPVKRCCKVQCESCTPCC</sequence>
<reference key="1">
    <citation type="journal article" date="2006" name="Genomics">
        <title>Diversity and evolution of conotoxins based on gene expression profiling of Conus litteratus.</title>
        <authorList>
            <person name="Pi C."/>
            <person name="Liu J."/>
            <person name="Peng C."/>
            <person name="Liu Y."/>
            <person name="Jiang X."/>
            <person name="Zhao Y."/>
            <person name="Tang S."/>
            <person name="Wang L."/>
            <person name="Dong M."/>
            <person name="Chen S."/>
            <person name="Xu A."/>
        </authorList>
    </citation>
    <scope>NUCLEOTIDE SEQUENCE [MRNA]</scope>
    <source>
        <tissue>Venom duct</tissue>
    </source>
</reference>
<dbReference type="EMBL" id="DQ345381">
    <property type="protein sequence ID" value="ABC74989.1"/>
    <property type="molecule type" value="mRNA"/>
</dbReference>
<dbReference type="ConoServer" id="1167">
    <property type="toxin name" value="LtIIIE precursor"/>
</dbReference>
<dbReference type="GO" id="GO:0005576">
    <property type="term" value="C:extracellular region"/>
    <property type="evidence" value="ECO:0007669"/>
    <property type="project" value="UniProtKB-SubCell"/>
</dbReference>
<dbReference type="GO" id="GO:0008200">
    <property type="term" value="F:ion channel inhibitor activity"/>
    <property type="evidence" value="ECO:0007669"/>
    <property type="project" value="InterPro"/>
</dbReference>
<dbReference type="GO" id="GO:0090729">
    <property type="term" value="F:toxin activity"/>
    <property type="evidence" value="ECO:0007669"/>
    <property type="project" value="UniProtKB-KW"/>
</dbReference>
<dbReference type="InterPro" id="IPR004214">
    <property type="entry name" value="Conotoxin"/>
</dbReference>
<dbReference type="Pfam" id="PF02950">
    <property type="entry name" value="Conotoxin"/>
    <property type="match status" value="1"/>
</dbReference>